<reference key="1">
    <citation type="journal article" date="1996" name="Microbiology">
        <title>New genes in the 170 degrees region of the Bacillus subtilis genome encode DNA gyrase subunits, a thioredoxin, a xylanase and an amino acid transporter.</title>
        <authorList>
            <person name="Rose M."/>
            <person name="Entian K.-D."/>
        </authorList>
    </citation>
    <scope>NUCLEOTIDE SEQUENCE [GENOMIC DNA]</scope>
    <source>
        <strain>168</strain>
    </source>
</reference>
<reference key="2">
    <citation type="journal article" date="1997" name="Nature">
        <title>The complete genome sequence of the Gram-positive bacterium Bacillus subtilis.</title>
        <authorList>
            <person name="Kunst F."/>
            <person name="Ogasawara N."/>
            <person name="Moszer I."/>
            <person name="Albertini A.M."/>
            <person name="Alloni G."/>
            <person name="Azevedo V."/>
            <person name="Bertero M.G."/>
            <person name="Bessieres P."/>
            <person name="Bolotin A."/>
            <person name="Borchert S."/>
            <person name="Borriss R."/>
            <person name="Boursier L."/>
            <person name="Brans A."/>
            <person name="Braun M."/>
            <person name="Brignell S.C."/>
            <person name="Bron S."/>
            <person name="Brouillet S."/>
            <person name="Bruschi C.V."/>
            <person name="Caldwell B."/>
            <person name="Capuano V."/>
            <person name="Carter N.M."/>
            <person name="Choi S.-K."/>
            <person name="Codani J.-J."/>
            <person name="Connerton I.F."/>
            <person name="Cummings N.J."/>
            <person name="Daniel R.A."/>
            <person name="Denizot F."/>
            <person name="Devine K.M."/>
            <person name="Duesterhoeft A."/>
            <person name="Ehrlich S.D."/>
            <person name="Emmerson P.T."/>
            <person name="Entian K.-D."/>
            <person name="Errington J."/>
            <person name="Fabret C."/>
            <person name="Ferrari E."/>
            <person name="Foulger D."/>
            <person name="Fritz C."/>
            <person name="Fujita M."/>
            <person name="Fujita Y."/>
            <person name="Fuma S."/>
            <person name="Galizzi A."/>
            <person name="Galleron N."/>
            <person name="Ghim S.-Y."/>
            <person name="Glaser P."/>
            <person name="Goffeau A."/>
            <person name="Golightly E.J."/>
            <person name="Grandi G."/>
            <person name="Guiseppi G."/>
            <person name="Guy B.J."/>
            <person name="Haga K."/>
            <person name="Haiech J."/>
            <person name="Harwood C.R."/>
            <person name="Henaut A."/>
            <person name="Hilbert H."/>
            <person name="Holsappel S."/>
            <person name="Hosono S."/>
            <person name="Hullo M.-F."/>
            <person name="Itaya M."/>
            <person name="Jones L.-M."/>
            <person name="Joris B."/>
            <person name="Karamata D."/>
            <person name="Kasahara Y."/>
            <person name="Klaerr-Blanchard M."/>
            <person name="Klein C."/>
            <person name="Kobayashi Y."/>
            <person name="Koetter P."/>
            <person name="Koningstein G."/>
            <person name="Krogh S."/>
            <person name="Kumano M."/>
            <person name="Kurita K."/>
            <person name="Lapidus A."/>
            <person name="Lardinois S."/>
            <person name="Lauber J."/>
            <person name="Lazarevic V."/>
            <person name="Lee S.-M."/>
            <person name="Levine A."/>
            <person name="Liu H."/>
            <person name="Masuda S."/>
            <person name="Mauel C."/>
            <person name="Medigue C."/>
            <person name="Medina N."/>
            <person name="Mellado R.P."/>
            <person name="Mizuno M."/>
            <person name="Moestl D."/>
            <person name="Nakai S."/>
            <person name="Noback M."/>
            <person name="Noone D."/>
            <person name="O'Reilly M."/>
            <person name="Ogawa K."/>
            <person name="Ogiwara A."/>
            <person name="Oudega B."/>
            <person name="Park S.-H."/>
            <person name="Parro V."/>
            <person name="Pohl T.M."/>
            <person name="Portetelle D."/>
            <person name="Porwollik S."/>
            <person name="Prescott A.M."/>
            <person name="Presecan E."/>
            <person name="Pujic P."/>
            <person name="Purnelle B."/>
            <person name="Rapoport G."/>
            <person name="Rey M."/>
            <person name="Reynolds S."/>
            <person name="Rieger M."/>
            <person name="Rivolta C."/>
            <person name="Rocha E."/>
            <person name="Roche B."/>
            <person name="Rose M."/>
            <person name="Sadaie Y."/>
            <person name="Sato T."/>
            <person name="Scanlan E."/>
            <person name="Schleich S."/>
            <person name="Schroeter R."/>
            <person name="Scoffone F."/>
            <person name="Sekiguchi J."/>
            <person name="Sekowska A."/>
            <person name="Seror S.J."/>
            <person name="Serror P."/>
            <person name="Shin B.-S."/>
            <person name="Soldo B."/>
            <person name="Sorokin A."/>
            <person name="Tacconi E."/>
            <person name="Takagi T."/>
            <person name="Takahashi H."/>
            <person name="Takemaru K."/>
            <person name="Takeuchi M."/>
            <person name="Tamakoshi A."/>
            <person name="Tanaka T."/>
            <person name="Terpstra P."/>
            <person name="Tognoni A."/>
            <person name="Tosato V."/>
            <person name="Uchiyama S."/>
            <person name="Vandenbol M."/>
            <person name="Vannier F."/>
            <person name="Vassarotti A."/>
            <person name="Viari A."/>
            <person name="Wambutt R."/>
            <person name="Wedler E."/>
            <person name="Wedler H."/>
            <person name="Weitzenegger T."/>
            <person name="Winters P."/>
            <person name="Wipat A."/>
            <person name="Yamamoto H."/>
            <person name="Yamane K."/>
            <person name="Yasumoto K."/>
            <person name="Yata K."/>
            <person name="Yoshida K."/>
            <person name="Yoshikawa H.-F."/>
            <person name="Zumstein E."/>
            <person name="Yoshikawa H."/>
            <person name="Danchin A."/>
        </authorList>
    </citation>
    <scope>NUCLEOTIDE SEQUENCE [LARGE SCALE GENOMIC DNA]</scope>
    <source>
        <strain>168</strain>
    </source>
</reference>
<keyword id="KW-0378">Hydrolase</keyword>
<keyword id="KW-1185">Reference proteome</keyword>
<proteinExistence type="inferred from homology"/>
<dbReference type="EC" id="3.1.2.-"/>
<dbReference type="EMBL" id="Z73234">
    <property type="protein sequence ID" value="CAA97601.1"/>
    <property type="status" value="ALT_INIT"/>
    <property type="molecule type" value="Genomic_DNA"/>
</dbReference>
<dbReference type="EMBL" id="AL009126">
    <property type="protein sequence ID" value="CAB13687.1"/>
    <property type="status" value="ALT_INIT"/>
    <property type="molecule type" value="Genomic_DNA"/>
</dbReference>
<dbReference type="PIR" id="F69891">
    <property type="entry name" value="F69891"/>
</dbReference>
<dbReference type="RefSeq" id="WP_003231566.1">
    <property type="nucleotide sequence ID" value="NZ_OZ025638.1"/>
</dbReference>
<dbReference type="RefSeq" id="WP_010886521.1">
    <property type="nucleotide sequence ID" value="NC_000964.3"/>
</dbReference>
<dbReference type="RefSeq" id="YP_054580.1">
    <property type="nucleotide sequence ID" value="NC_000964.3"/>
</dbReference>
<dbReference type="SMR" id="Q45061"/>
<dbReference type="FunCoup" id="Q45061">
    <property type="interactions" value="129"/>
</dbReference>
<dbReference type="STRING" id="224308.BSU18040"/>
<dbReference type="PaxDb" id="224308-BSU18040"/>
<dbReference type="EnsemblBacteria" id="CAB13687">
    <property type="protein sequence ID" value="CAB13687"/>
    <property type="gene ID" value="BSU_18040"/>
</dbReference>
<dbReference type="GeneID" id="2914242"/>
<dbReference type="KEGG" id="bsu:BSU18040"/>
<dbReference type="PATRIC" id="fig|224308.179.peg.1966"/>
<dbReference type="eggNOG" id="COG0824">
    <property type="taxonomic scope" value="Bacteria"/>
</dbReference>
<dbReference type="InParanoid" id="Q45061"/>
<dbReference type="OrthoDB" id="9800856at2"/>
<dbReference type="BioCyc" id="BSUB:BSU18040-MONOMER"/>
<dbReference type="Proteomes" id="UP000001570">
    <property type="component" value="Chromosome"/>
</dbReference>
<dbReference type="GO" id="GO:0047617">
    <property type="term" value="F:fatty acyl-CoA hydrolase activity"/>
    <property type="evidence" value="ECO:0000318"/>
    <property type="project" value="GO_Central"/>
</dbReference>
<dbReference type="CDD" id="cd00586">
    <property type="entry name" value="4HBT"/>
    <property type="match status" value="1"/>
</dbReference>
<dbReference type="FunFam" id="3.10.129.10:FF:000026">
    <property type="entry name" value="Possible 4-hydroxybenzoyl-CoA thioesterase"/>
    <property type="match status" value="1"/>
</dbReference>
<dbReference type="Gene3D" id="3.10.129.10">
    <property type="entry name" value="Hotdog Thioesterase"/>
    <property type="match status" value="1"/>
</dbReference>
<dbReference type="InterPro" id="IPR050563">
    <property type="entry name" value="4-hydroxybenzoyl-CoA_TE"/>
</dbReference>
<dbReference type="InterPro" id="IPR029069">
    <property type="entry name" value="HotDog_dom_sf"/>
</dbReference>
<dbReference type="InterPro" id="IPR006684">
    <property type="entry name" value="YbgC/YbaW"/>
</dbReference>
<dbReference type="NCBIfam" id="TIGR00051">
    <property type="entry name" value="YbgC/FadM family acyl-CoA thioesterase"/>
    <property type="match status" value="1"/>
</dbReference>
<dbReference type="PANTHER" id="PTHR31793">
    <property type="entry name" value="4-HYDROXYBENZOYL-COA THIOESTERASE FAMILY MEMBER"/>
    <property type="match status" value="1"/>
</dbReference>
<dbReference type="PANTHER" id="PTHR31793:SF27">
    <property type="entry name" value="NOVEL THIOESTERASE SUPERFAMILY DOMAIN AND SAPOSIN A-TYPE DOMAIN CONTAINING PROTEIN (0610012H03RIK)"/>
    <property type="match status" value="1"/>
</dbReference>
<dbReference type="Pfam" id="PF13279">
    <property type="entry name" value="4HBT_2"/>
    <property type="match status" value="1"/>
</dbReference>
<dbReference type="PIRSF" id="PIRSF003230">
    <property type="entry name" value="YbgC"/>
    <property type="match status" value="1"/>
</dbReference>
<dbReference type="SUPFAM" id="SSF54637">
    <property type="entry name" value="Thioesterase/thiol ester dehydrase-isomerase"/>
    <property type="match status" value="1"/>
</dbReference>
<evidence type="ECO:0000250" key="1"/>
<evidence type="ECO:0000305" key="2"/>
<comment type="function">
    <text evidence="1">Has acyl-CoA thioesterase activity.</text>
</comment>
<comment type="similarity">
    <text evidence="2">Belongs to the 4-hydroxybenzoyl-CoA thioesterase family.</text>
</comment>
<comment type="sequence caution" evidence="2">
    <conflict type="erroneous initiation">
        <sequence resource="EMBL-CDS" id="CAA97601"/>
    </conflict>
</comment>
<comment type="sequence caution" evidence="2">
    <conflict type="erroneous initiation">
        <sequence resource="EMBL-CDS" id="CAB13687"/>
    </conflict>
</comment>
<organism>
    <name type="scientific">Bacillus subtilis (strain 168)</name>
    <dbReference type="NCBI Taxonomy" id="224308"/>
    <lineage>
        <taxon>Bacteria</taxon>
        <taxon>Bacillati</taxon>
        <taxon>Bacillota</taxon>
        <taxon>Bacilli</taxon>
        <taxon>Bacillales</taxon>
        <taxon>Bacillaceae</taxon>
        <taxon>Bacillus</taxon>
    </lineage>
</organism>
<sequence>MHVSKKEIEVRYAETDQMGIVYHANYLVWMEVGRTALIKDLGFLYSDMEKKGVLSPVVDINISYKKPLHYGETAVVHTWIEDYNGFKTVYGYHIYNPAGELSIKATSSHICVDKESFKPIQFRKAFPDWHTAYEKAKK</sequence>
<gene>
    <name type="primary">yneP</name>
    <name type="ordered locus">BSU18040</name>
</gene>
<name>YNEP_BACSU</name>
<protein>
    <recommendedName>
        <fullName>Putative acyl-CoA thioesterase YneP</fullName>
        <ecNumber>3.1.2.-</ecNumber>
    </recommendedName>
</protein>
<accession>Q45061</accession>
<accession>Q796G8</accession>
<feature type="chain" id="PRO_0000382896" description="Putative acyl-CoA thioesterase YneP">
    <location>
        <begin position="1"/>
        <end position="138"/>
    </location>
</feature>
<feature type="active site" evidence="1">
    <location>
        <position position="16"/>
    </location>
</feature>